<feature type="chain" id="PRO_0000291650" description="Large ribosomal subunit protein eL18">
    <location>
        <begin position="1"/>
        <end position="189"/>
    </location>
</feature>
<name>RL18_AEDAE</name>
<proteinExistence type="evidence at transcript level"/>
<keyword id="KW-0963">Cytoplasm</keyword>
<keyword id="KW-1185">Reference proteome</keyword>
<keyword id="KW-0687">Ribonucleoprotein</keyword>
<keyword id="KW-0689">Ribosomal protein</keyword>
<sequence>MGIDINHKWDRKVRRTKPKSLDVYLRLLVKLYRFLYRRTHKKFNKIILRRLFMSRTNQPPISLSRVAKLMKLRGKDENTIAVVVGTVTNDDRKLYCPKMNVCALRVTEKARERILKWGGKIYTFDQLALVAPTGKNTVLMQGERTAREAFTHFGRAPGVPHSNTRPYVQSKGRKYEKARGRRSSCGFKN</sequence>
<evidence type="ECO:0000250" key="1"/>
<evidence type="ECO:0000305" key="2"/>
<accession>Q1HR62</accession>
<accession>J9HU21</accession>
<gene>
    <name type="primary">RpL18</name>
    <name type="ORF">AAEL008481</name>
</gene>
<protein>
    <recommendedName>
        <fullName evidence="2">Large ribosomal subunit protein eL18</fullName>
    </recommendedName>
    <alternativeName>
        <fullName>60S ribosomal protein L18</fullName>
    </alternativeName>
</protein>
<comment type="subcellular location">
    <subcellularLocation>
        <location evidence="1">Cytoplasm</location>
    </subcellularLocation>
</comment>
<comment type="similarity">
    <text evidence="2">Belongs to the eukaryotic ribosomal protein eL18 family.</text>
</comment>
<organism>
    <name type="scientific">Aedes aegypti</name>
    <name type="common">Yellowfever mosquito</name>
    <name type="synonym">Culex aegypti</name>
    <dbReference type="NCBI Taxonomy" id="7159"/>
    <lineage>
        <taxon>Eukaryota</taxon>
        <taxon>Metazoa</taxon>
        <taxon>Ecdysozoa</taxon>
        <taxon>Arthropoda</taxon>
        <taxon>Hexapoda</taxon>
        <taxon>Insecta</taxon>
        <taxon>Pterygota</taxon>
        <taxon>Neoptera</taxon>
        <taxon>Endopterygota</taxon>
        <taxon>Diptera</taxon>
        <taxon>Nematocera</taxon>
        <taxon>Culicoidea</taxon>
        <taxon>Culicidae</taxon>
        <taxon>Culicinae</taxon>
        <taxon>Aedini</taxon>
        <taxon>Aedes</taxon>
        <taxon>Stegomyia</taxon>
    </lineage>
</organism>
<reference key="1">
    <citation type="journal article" date="2007" name="BMC Genomics">
        <title>An annotated catalogue of salivary gland transcripts in the adult female mosquito, Aedes aegypti.</title>
        <authorList>
            <person name="Ribeiro J.M.C."/>
            <person name="Arca B."/>
            <person name="Lombardo F."/>
            <person name="Calvo E."/>
            <person name="Phan V.M."/>
            <person name="Chandra P.K."/>
            <person name="Wikel S.K."/>
        </authorList>
    </citation>
    <scope>NUCLEOTIDE SEQUENCE [LARGE SCALE MRNA]</scope>
    <source>
        <strain>Black-eyed Liverpool</strain>
        <tissue>Salivary gland</tissue>
    </source>
</reference>
<reference key="2">
    <citation type="journal article" date="2007" name="Science">
        <title>Genome sequence of Aedes aegypti, a major arbovirus vector.</title>
        <authorList>
            <person name="Nene V."/>
            <person name="Wortman J.R."/>
            <person name="Lawson D."/>
            <person name="Haas B.J."/>
            <person name="Kodira C.D."/>
            <person name="Tu Z.J."/>
            <person name="Loftus B.J."/>
            <person name="Xi Z."/>
            <person name="Megy K."/>
            <person name="Grabherr M."/>
            <person name="Ren Q."/>
            <person name="Zdobnov E.M."/>
            <person name="Lobo N.F."/>
            <person name="Campbell K.S."/>
            <person name="Brown S.E."/>
            <person name="Bonaldo M.F."/>
            <person name="Zhu J."/>
            <person name="Sinkins S.P."/>
            <person name="Hogenkamp D.G."/>
            <person name="Amedeo P."/>
            <person name="Arensburger P."/>
            <person name="Atkinson P.W."/>
            <person name="Bidwell S.L."/>
            <person name="Biedler J."/>
            <person name="Birney E."/>
            <person name="Bruggner R.V."/>
            <person name="Costas J."/>
            <person name="Coy M.R."/>
            <person name="Crabtree J."/>
            <person name="Crawford M."/>
            <person name="DeBruyn B."/>
            <person name="DeCaprio D."/>
            <person name="Eiglmeier K."/>
            <person name="Eisenstadt E."/>
            <person name="El-Dorry H."/>
            <person name="Gelbart W.M."/>
            <person name="Gomes S.L."/>
            <person name="Hammond M."/>
            <person name="Hannick L.I."/>
            <person name="Hogan J.R."/>
            <person name="Holmes M.H."/>
            <person name="Jaffe D."/>
            <person name="Johnston S.J."/>
            <person name="Kennedy R.C."/>
            <person name="Koo H."/>
            <person name="Kravitz S."/>
            <person name="Kriventseva E.V."/>
            <person name="Kulp D."/>
            <person name="Labutti K."/>
            <person name="Lee E."/>
            <person name="Li S."/>
            <person name="Lovin D.D."/>
            <person name="Mao C."/>
            <person name="Mauceli E."/>
            <person name="Menck C.F."/>
            <person name="Miller J.R."/>
            <person name="Montgomery P."/>
            <person name="Mori A."/>
            <person name="Nascimento A.L."/>
            <person name="Naveira H.F."/>
            <person name="Nusbaum C."/>
            <person name="O'Leary S.B."/>
            <person name="Orvis J."/>
            <person name="Pertea M."/>
            <person name="Quesneville H."/>
            <person name="Reidenbach K.R."/>
            <person name="Rogers Y.-H.C."/>
            <person name="Roth C.W."/>
            <person name="Schneider J.R."/>
            <person name="Schatz M."/>
            <person name="Shumway M."/>
            <person name="Stanke M."/>
            <person name="Stinson E.O."/>
            <person name="Tubio J.M.C."/>
            <person name="Vanzee J.P."/>
            <person name="Verjovski-Almeida S."/>
            <person name="Werner D."/>
            <person name="White O.R."/>
            <person name="Wyder S."/>
            <person name="Zeng Q."/>
            <person name="Zhao Q."/>
            <person name="Zhao Y."/>
            <person name="Hill C.A."/>
            <person name="Raikhel A.S."/>
            <person name="Soares M.B."/>
            <person name="Knudson D.L."/>
            <person name="Lee N.H."/>
            <person name="Galagan J."/>
            <person name="Salzberg S.L."/>
            <person name="Paulsen I.T."/>
            <person name="Dimopoulos G."/>
            <person name="Collins F.H."/>
            <person name="Bruce B."/>
            <person name="Fraser-Liggett C.M."/>
            <person name="Severson D.W."/>
        </authorList>
    </citation>
    <scope>NUCLEOTIDE SEQUENCE [LARGE SCALE GENOMIC DNA]</scope>
    <source>
        <strain>LVPib12</strain>
    </source>
</reference>
<dbReference type="EMBL" id="DQ440232">
    <property type="protein sequence ID" value="ABF18265.1"/>
    <property type="molecule type" value="mRNA"/>
</dbReference>
<dbReference type="EMBL" id="CH477513">
    <property type="protein sequence ID" value="EAT39741.1"/>
    <property type="molecule type" value="Genomic_DNA"/>
</dbReference>
<dbReference type="EMBL" id="CH477513">
    <property type="protein sequence ID" value="EJY58163.1"/>
    <property type="molecule type" value="Genomic_DNA"/>
</dbReference>
<dbReference type="SMR" id="Q1HR62"/>
<dbReference type="FunCoup" id="Q1HR62">
    <property type="interactions" value="1382"/>
</dbReference>
<dbReference type="STRING" id="7159.Q1HR62"/>
<dbReference type="PaxDb" id="7159-AAEL008481-PA"/>
<dbReference type="EnsemblMetazoa" id="AAEL008481-RA">
    <property type="protein sequence ID" value="AAEL008481-PA"/>
    <property type="gene ID" value="AAEL008481"/>
</dbReference>
<dbReference type="EnsemblMetazoa" id="AAEL008481-RB">
    <property type="protein sequence ID" value="AAEL008481-PB"/>
    <property type="gene ID" value="AAEL008481"/>
</dbReference>
<dbReference type="GeneID" id="5570675"/>
<dbReference type="KEGG" id="aag:5570675"/>
<dbReference type="CTD" id="6141"/>
<dbReference type="VEuPathDB" id="VectorBase:AAEL008481"/>
<dbReference type="eggNOG" id="KOG1714">
    <property type="taxonomic scope" value="Eukaryota"/>
</dbReference>
<dbReference type="HOGENOM" id="CLU_080024_0_0_1"/>
<dbReference type="InParanoid" id="Q1HR62"/>
<dbReference type="OMA" id="IDICHKN"/>
<dbReference type="OrthoDB" id="6353017at2759"/>
<dbReference type="PhylomeDB" id="Q1HR62"/>
<dbReference type="Proteomes" id="UP000008820">
    <property type="component" value="Chromosome 2"/>
</dbReference>
<dbReference type="Proteomes" id="UP000682892">
    <property type="component" value="Chromosome 2"/>
</dbReference>
<dbReference type="GO" id="GO:0022625">
    <property type="term" value="C:cytosolic large ribosomal subunit"/>
    <property type="evidence" value="ECO:0007669"/>
    <property type="project" value="TreeGrafter"/>
</dbReference>
<dbReference type="GO" id="GO:0003723">
    <property type="term" value="F:RNA binding"/>
    <property type="evidence" value="ECO:0007669"/>
    <property type="project" value="TreeGrafter"/>
</dbReference>
<dbReference type="GO" id="GO:0003735">
    <property type="term" value="F:structural constituent of ribosome"/>
    <property type="evidence" value="ECO:0007669"/>
    <property type="project" value="InterPro"/>
</dbReference>
<dbReference type="GO" id="GO:0006412">
    <property type="term" value="P:translation"/>
    <property type="evidence" value="ECO:0007669"/>
    <property type="project" value="InterPro"/>
</dbReference>
<dbReference type="FunFam" id="3.100.10.10:FF:000001">
    <property type="entry name" value="60S ribosomal protein L18"/>
    <property type="match status" value="1"/>
</dbReference>
<dbReference type="Gene3D" id="3.100.10.10">
    <property type="match status" value="1"/>
</dbReference>
<dbReference type="InterPro" id="IPR000039">
    <property type="entry name" value="Ribosomal_eL18"/>
</dbReference>
<dbReference type="InterPro" id="IPR021131">
    <property type="entry name" value="Ribosomal_uL15/eL18"/>
</dbReference>
<dbReference type="InterPro" id="IPR036227">
    <property type="entry name" value="Ribosomal_uL15/eL18_sf"/>
</dbReference>
<dbReference type="PANTHER" id="PTHR10934">
    <property type="entry name" value="60S RIBOSOMAL PROTEIN L18"/>
    <property type="match status" value="1"/>
</dbReference>
<dbReference type="PANTHER" id="PTHR10934:SF2">
    <property type="entry name" value="LARGE RIBOSOMAL SUBUNIT PROTEIN EL18"/>
    <property type="match status" value="1"/>
</dbReference>
<dbReference type="Pfam" id="PF17135">
    <property type="entry name" value="Ribosomal_L18"/>
    <property type="match status" value="1"/>
</dbReference>
<dbReference type="SUPFAM" id="SSF52080">
    <property type="entry name" value="Ribosomal proteins L15p and L18e"/>
    <property type="match status" value="1"/>
</dbReference>